<reference evidence="15" key="1">
    <citation type="journal article" date="1998" name="Science">
        <title>Genome sequence of the nematode C. elegans: a platform for investigating biology.</title>
        <authorList>
            <consortium name="The C. elegans sequencing consortium"/>
        </authorList>
    </citation>
    <scope>NUCLEOTIDE SEQUENCE [LARGE SCALE GENOMIC DNA]</scope>
    <source>
        <strain evidence="15">Bristol N2</strain>
    </source>
</reference>
<reference evidence="14" key="2">
    <citation type="journal article" date="1984" name="Genetics">
        <title>An autosomal gene that affects X chromosome expression and sex determination in Caenorhabditis elegans.</title>
        <authorList>
            <person name="Meneely P.M."/>
            <person name="Wood W.B."/>
        </authorList>
    </citation>
    <scope>FUNCTION</scope>
    <scope>DISRUPTION PHENOTYPE</scope>
</reference>
<reference evidence="14" key="3">
    <citation type="journal article" date="1986" name="Cell">
        <title>Caenorhabditis elegans compensates for the difference in X chromosome dosage between the sexes by regulating transcript levels.</title>
        <authorList>
            <person name="Meyer B.J."/>
            <person name="Casson L.P."/>
        </authorList>
    </citation>
    <scope>FUNCTION</scope>
</reference>
<reference evidence="14" key="4">
    <citation type="journal article" date="1987" name="Proc. Natl. Acad. Sci. U.S.A.">
        <title>Molecular analysis of X chromosome dosage compensation in Caenorhabditis elegans.</title>
        <authorList>
            <person name="Donahue L.M."/>
            <person name="Quarantillo B.A."/>
            <person name="Wood W.B."/>
        </authorList>
    </citation>
    <scope>FUNCTION</scope>
    <scope>DISRUPTION PHENOTYPE</scope>
</reference>
<reference evidence="14" key="5">
    <citation type="journal article" date="2003" name="Development">
        <title>Recruitment of C. elegans dosage compensation proteins for gene-specific versus chromosome-wide repression.</title>
        <authorList>
            <person name="Yonker S.A."/>
            <person name="Meyer B.J."/>
        </authorList>
    </citation>
    <scope>FUNCTION</scope>
    <scope>INTERACTION WITH SDC-3; DPY-27 AND DPY-26</scope>
    <scope>SUBCELLULAR LOCATION</scope>
    <scope>DEVELOPMENTAL STAGE</scope>
    <scope>DISRUPTION PHENOTYPE</scope>
</reference>
<reference evidence="14" key="6">
    <citation type="journal article" date="2012" name="Mol. Cell. Biol.">
        <title>Caenorhabditis elegans dosage compensation regulates histone H4 chromatin state on X chromosomes.</title>
        <authorList>
            <person name="Wells M.B."/>
            <person name="Snyder M.J."/>
            <person name="Custer L.M."/>
            <person name="Csankovszki G."/>
        </authorList>
    </citation>
    <scope>FUNCTION</scope>
    <scope>DISRUPTION PHENOTYPE</scope>
</reference>
<reference evidence="14" key="7">
    <citation type="journal article" date="2012" name="PLoS Genet.">
        <title>H4K20me1 contributes to downregulation of X-linked genes for C. elegans dosage compensation.</title>
        <authorList>
            <person name="Vielle A."/>
            <person name="Lang J."/>
            <person name="Dong Y."/>
            <person name="Ercan S."/>
            <person name="Kotwaliwale C."/>
            <person name="Rechtsteiner A."/>
            <person name="Appert A."/>
            <person name="Chen Q.B."/>
            <person name="Dose A."/>
            <person name="Egelhofer T."/>
            <person name="Kimura H."/>
            <person name="Stempor P."/>
            <person name="Dernburg A."/>
            <person name="Lieb J.D."/>
            <person name="Strome S."/>
            <person name="Ahringer J."/>
        </authorList>
    </citation>
    <scope>FUNCTION</scope>
    <scope>DISRUPTION PHENOTYPE</scope>
</reference>
<reference evidence="14" key="8">
    <citation type="journal article" date="2013" name="Development">
        <title>A non-canonical role for the C. elegans dosage compensation complex in growth and metabolic regulation downstream of TOR complex 2.</title>
        <authorList>
            <person name="Webster C.M."/>
            <person name="Wu L."/>
            <person name="Douglas D."/>
            <person name="Soukas A.A."/>
        </authorList>
    </citation>
    <scope>FUNCTION</scope>
    <scope>INTERACTION WITH SGK-1</scope>
    <scope>DISRUPTION PHENOTYPE</scope>
</reference>
<reference evidence="14" key="9">
    <citation type="journal article" date="2015" name="PLoS Genet.">
        <title>Developmental dynamics of X-chromosome dosage compensation by the DCC and H4K20me1 in C. elegans.</title>
        <authorList>
            <person name="Kramer M."/>
            <person name="Kranz A.L."/>
            <person name="Su A."/>
            <person name="Winterkorn L.H."/>
            <person name="Albritton S.E."/>
            <person name="Ercan S."/>
        </authorList>
    </citation>
    <scope>FUNCTION</scope>
    <scope>DISRUPTION PHENOTYPE</scope>
</reference>
<reference key="10">
    <citation type="journal article" date="2017" name="Cell">
        <title>Dynamic Control of X Chromosome Conformation and Repression by a Histone H4K20 Demethylase.</title>
        <authorList>
            <person name="Brejc K."/>
            <person name="Bian Q."/>
            <person name="Uzawa S."/>
            <person name="Wheeler B.S."/>
            <person name="Anderson E.C."/>
            <person name="King D.S."/>
            <person name="Kranzusch P.J."/>
            <person name="Preston C.G."/>
            <person name="Meyer B.J."/>
        </authorList>
    </citation>
    <scope>X-RAY CRYSTALLOGRAPHY (1.8 ANGSTROMS) OF 1210-1617 IN COMPLEX WITH ALPHA-KETOGLUTARATE AND IRON</scope>
    <scope>FUNCTION</scope>
    <scope>COFACTOR</scope>
    <scope>SUBCELLULAR LOCATION</scope>
    <scope>MUTAGENESIS OF 1452-HIS--ASP-1454; HIS-1452 AND ASP-1454</scope>
</reference>
<sequence>MRSTTFDKNSGAPEEPRRPRGPRTPDGEPTEANERPCSSSSSLSNDSFVPAPQGPQNGHTSSSHDNDYSEYRPRRGPKTPPLPPPDEPVKQQQQQQPIVAPYSYYPTYGSSTGYPYPYPTMMMPQQGIPGPSQHPATPSYYIQHPPPPSMSNGAPYYPHMNPSPYYQPRPNYVTQPPAPIIPPPQPPVMTASAAAAAYRDRLPPPPPKPPMPDLRTKEPIGIRSWNGSGIPPPPILPPVACLSSTMSPGMLRSPVPRERFNSVESNGSFSLHPPPPVPPPAKKPLNMDVRELLNGAHQTTVESVKKDPPAPQPRPRPIPVPPTTSYNSSFCGLLPPPPVPPDLRASAASAAASPPMVQDASFSSVLTPKTKAPEKIPSPPATVTSSTDSLEHMQRKRKKQQETEEQEKAAKKAKRHQEERERQKIEAEKRKKAILEEAAKVTRPPAEKKPPVVVEETIRAVPFVFKQEMPLPFVLAAAAAAAKEPETRPEPRPEPKQNGYHVKQAEPLQAEPPQNGYRLAAAQALQHEPRQASEPLQNVQPEPSKQASELVQNGYAAPQEPRRATPPPEPLRNELPKHSDLLNVSKPSEPAEPPKPSDAPREPEVAAAEAVIPEPSPAVSVEEPPRREERAASMAGIPPPPPTSSRHSPVPRREDRAEFMARSTPPAPGKDRKSLGGRMAMWRNKKNKTASMVGPPEPKELPAVVEVEAIVEPVVEDQPEPVVSEELKPTEPEPVEPEPMEVEPVVAKEVVEEVVEEVVETQEPWVPLSECSRSSSLELLAELPPPPRASEPPPPPPPPVATAPVPASMEEDEIIDIETIDEITSTSTKKPEKVEKIKKAPVVTKAALKMVGRPKKTPGRRRKKDRGASPSPSPSPPPPPETTLTPIVLPRKKQRIEKKKLTPPPPQQAPVTSHTPPPVEQLMSRKKQIMMEHSSLDHIQFKLIEIELAAKRRKAEAAAKAAAAVEQKDEKAEEVENRETPPGPSTSMRSSSLHTPNTSEEDEVIFVEPSTLEKPERRNGTTEERVMTADQRAMFDAKIEEARRSRMSTRDCSVVSTLGPVKSKASQRLHDIIEGKEELEDSMDDPTNNNGTLAGILYPMRSERAESVSSNHRSEGAGGSMSLKHHLARKNELKEEANVARRSEILKAVVKRQREIGVPTTLMSKSAIELVEEDEKERKNHKNNKTLSHPDYVRSKNEAEKAEFHGKGGTMRITNRNLKMLTRQFDLPKMSSRFRKFVRIRRHPNGMATIISCDYNQIKQHLGPNEMKHFERQFVRLGFAENNGVPLFAIGVMENAAEALHDQFEWLAKNSPNTQVKVGSLTNKQFIETMPMKKYYESAMETLDMGTFRFGPLMSLSMVGTKNEEAGGNFKEMLDALNAAPFLGPIMPWGDFSEVQGIKEDTSDDGPIFWVRPGEQMVPTDGKNRSTEPRHPLATRGNDRRETAFNDRTNAHADQVRESTEDDPTTTTTTTTTTSSSSSSSKSKKSAKSDPTFVKSTAAVGVLQGIRNPDANDDDEYYEDERKAVKEVIVFDAHDLHKVAHHLAMDLYEPPVSQCHRWVDDAILNTMRREGIRYAKLELHENDMYFLPRNVIHQFRTVSACSSVAWHVRLRHYYDVDQPASLSDPQFECDSDYSDDGDFDD</sequence>
<dbReference type="EC" id="1.14.11.-" evidence="9"/>
<dbReference type="EMBL" id="BX284605">
    <property type="protein sequence ID" value="CAC14406.1"/>
    <property type="molecule type" value="Genomic_DNA"/>
</dbReference>
<dbReference type="RefSeq" id="NP_001024266.1">
    <property type="nucleotide sequence ID" value="NM_001029095.4"/>
</dbReference>
<dbReference type="PDB" id="5UQD">
    <property type="method" value="X-ray"/>
    <property type="resolution" value="1.80 A"/>
    <property type="chains" value="A=1210-1617"/>
</dbReference>
<dbReference type="PDBsum" id="5UQD"/>
<dbReference type="SMR" id="Q9GRZ3"/>
<dbReference type="FunCoup" id="Q9GRZ3">
    <property type="interactions" value="195"/>
</dbReference>
<dbReference type="STRING" id="6239.Y59A8B.1a.1"/>
<dbReference type="PaxDb" id="6239-Y59A8B.1a"/>
<dbReference type="PeptideAtlas" id="Q9GRZ3"/>
<dbReference type="EnsemblMetazoa" id="Y59A8B.1a.1">
    <property type="protein sequence ID" value="Y59A8B.1a.1"/>
    <property type="gene ID" value="WBGene00001080"/>
</dbReference>
<dbReference type="GeneID" id="180176"/>
<dbReference type="KEGG" id="cel:CELE_Y59A8B.1"/>
<dbReference type="UCSC" id="Y59A8B.1a">
    <property type="organism name" value="c. elegans"/>
</dbReference>
<dbReference type="AGR" id="WB:WBGene00001080"/>
<dbReference type="CTD" id="180176"/>
<dbReference type="WormBase" id="Y59A8B.1a">
    <property type="protein sequence ID" value="CE26205"/>
    <property type="gene ID" value="WBGene00001080"/>
    <property type="gene designation" value="dpy-21"/>
</dbReference>
<dbReference type="eggNOG" id="KOG4425">
    <property type="taxonomic scope" value="Eukaryota"/>
</dbReference>
<dbReference type="GeneTree" id="ENSGT00390000001969"/>
<dbReference type="HOGENOM" id="CLU_242819_0_0_1"/>
<dbReference type="InParanoid" id="Q9GRZ3"/>
<dbReference type="OMA" id="CIANMEN"/>
<dbReference type="OrthoDB" id="6020087at2759"/>
<dbReference type="PRO" id="PR:Q9GRZ3"/>
<dbReference type="Proteomes" id="UP000001940">
    <property type="component" value="Chromosome V"/>
</dbReference>
<dbReference type="Bgee" id="WBGene00001080">
    <property type="expression patterns" value="Expressed in pharyngeal muscle cell (C elegans) and 4 other cell types or tissues"/>
</dbReference>
<dbReference type="GO" id="GO:0005634">
    <property type="term" value="C:nucleus"/>
    <property type="evidence" value="ECO:0000318"/>
    <property type="project" value="GO_Central"/>
</dbReference>
<dbReference type="GO" id="GO:0000805">
    <property type="term" value="C:X chromosome"/>
    <property type="evidence" value="ECO:0000314"/>
    <property type="project" value="WormBase"/>
</dbReference>
<dbReference type="GO" id="GO:0035575">
    <property type="term" value="F:histone H4K20 demethylase activity"/>
    <property type="evidence" value="ECO:0000314"/>
    <property type="project" value="FlyBase"/>
</dbReference>
<dbReference type="GO" id="GO:0046872">
    <property type="term" value="F:metal ion binding"/>
    <property type="evidence" value="ECO:0007669"/>
    <property type="project" value="UniProtKB-KW"/>
</dbReference>
<dbReference type="DisProt" id="DP02377"/>
<dbReference type="InterPro" id="IPR026306">
    <property type="entry name" value="RSBN1/Dpy-21"/>
</dbReference>
<dbReference type="PANTHER" id="PTHR13354:SF11">
    <property type="entry name" value="LYSINE-SPECIFIC DEMETHYLASE 9"/>
    <property type="match status" value="1"/>
</dbReference>
<dbReference type="PANTHER" id="PTHR13354">
    <property type="entry name" value="ROUND SPERMATID BASIC PROTEIN 1"/>
    <property type="match status" value="1"/>
</dbReference>
<accession>Q9GRZ3</accession>
<gene>
    <name evidence="16" type="primary">dpy-21</name>
    <name evidence="16" type="ORF">Y59A8B.1</name>
</gene>
<comment type="function">
    <text evidence="4 5 6 7 8 9 10 11 12">Histone demethylase that specifically demethylates dimethylated 'Lys-20' of histone H4 (H4K20me2), thereby modulating the chromosome architecture (PubMed:28867287). Promotes chromatin compaction by converting H4k20me2 to H4K20me1 leading to transcriptional repression (PubMed:28867287). Required for X chromosome dosage compensation by enriching H4K20me1 on X chromosomes and thereby reducing X-linked gene transcription in hermaphrodites throughout development (PubMed:14660541, PubMed:22393255, PubMed:23028348, PubMed:26641248, PubMed:28867287, PubMed:3478715, PubMed:3779843). X chromosome specificity is mediated by the recruitment through proteins of the condensin-like dosage compensation complex (DCC) (PubMed:14660541, PubMed:28867287). Required for the enrichment of H4K20me1 on autosomes in meiotic germ cells leading to their compaction in a DCC-independent mechanism (PubMed:28867287). Involved in 3-dimensional chromosome organization by strengthening the borders of topologically associating domains (PubMed:28867287). Involved in the regulation of growth, fecundity and body fat metabolism downstream of the TOR complex 2 and the protein kinase sgk-1 pathway (PubMed:23884442). Also involved in male tail development (PubMed:6537930).</text>
</comment>
<comment type="cofactor">
    <cofactor evidence="9">
        <name>Fe(2+)</name>
        <dbReference type="ChEBI" id="CHEBI:29033"/>
    </cofactor>
    <text evidence="9">Binds 1 Fe(2+) ion per subunit.</text>
</comment>
<comment type="subunit">
    <text evidence="4 7">Interacts with the dosage compensation proteins dpy-27, dpy-26 and sdc-3; the interaction is probably involved in dpy-21 recruitment to the X chromosomes in hermaphrodites (PubMed:14660541). Interacts with the serine/threonine-protein kinase sgk-1 (PubMed:23884442).</text>
</comment>
<comment type="subcellular location">
    <subcellularLocation>
        <location evidence="4 9">Nucleus</location>
    </subcellularLocation>
    <subcellularLocation>
        <location evidence="4 9">Chromosome</location>
    </subcellularLocation>
    <text evidence="4 9">Specifically localizes to the X chromosomes around the 300- to 350-cell stage in hermaphrodite (XX) but not in male (X0) embryos (PubMed:14660541, PubMed:28867287). Requires sdc-2, sdc-3, dpy-26, dpy-27 and dpy-28 for X chromosome localization (PubMed:14660541). Colocalizes with X chromosomes during interphase, but is diffusely distributed during mitosis (PubMed:28867287). Localizes to all autosomes but not to X chromosomes in pachytene nuclei (PubMed:28867287).</text>
</comment>
<comment type="developmental stage">
    <text evidence="4">Expressed throughout development, with highest expression during embryogenesis.</text>
</comment>
<comment type="disruption phenotype">
    <text evidence="4 5 6 7 8 9 10 12">Mutant hermaphrodites exhibit low larval lethality, and survivors have a XX-specific shorter and stouter body morphology and are egg-laying defective (PubMed:14660541, PubMed:28867287). Leads to lethality in animals with three X chromosomes and to intersex development in males with a sex-chromosome to autosome (X:A) ratio higher than 0.65 (PubMed:6537930). Overexpression of X-linked gene transcripts (PubMed:23028348, PubMed:26641248, PubMed:28867287, PubMed:3478715). Increased binding of the RNA Pol II large subunit ama-1 to promoters on the X chromosome relative to autosomes (PubMed:26641248). Reduced levels of 'Lys-20' monomethylation (H4K20me1) and an increase of 'Lys-20' trimethylation (H4K20me3) and 'Lys-16' acetylation (H4K16ac) on histone H4 of hermaphrodite X chromosomes (PubMed:22393255, PubMed:23028348, PubMed:26641248, PubMed:28867287). Increased volume of the X chromosome (PubMed:28867287). Suppresses the XO-specific lethality in a xol-1 mutant background, where the DCC is inappropriately activated (PubMed:28867287). RNAi-mediated knockdown results in shortened lifespan (PubMed:23884442). In a sinh-1 single or a rict-1;sgk-1 double mutant background, suppresses the developmental delay phenotype (PubMed:23884442). In a rict-1 mutant background, suppresses the developmental delay, elevated body fat mass and low brood size, but shortens the lifespan and decreases the body size (PubMed:23884442).</text>
</comment>
<comment type="similarity">
    <text evidence="14">Belongs to the round spermatid basic protein 1 family.</text>
</comment>
<organism evidence="15">
    <name type="scientific">Caenorhabditis elegans</name>
    <dbReference type="NCBI Taxonomy" id="6239"/>
    <lineage>
        <taxon>Eukaryota</taxon>
        <taxon>Metazoa</taxon>
        <taxon>Ecdysozoa</taxon>
        <taxon>Nematoda</taxon>
        <taxon>Chromadorea</taxon>
        <taxon>Rhabditida</taxon>
        <taxon>Rhabditina</taxon>
        <taxon>Rhabditomorpha</taxon>
        <taxon>Rhabditoidea</taxon>
        <taxon>Rhabditidae</taxon>
        <taxon>Peloderinae</taxon>
        <taxon>Caenorhabditis</taxon>
    </lineage>
</organism>
<feature type="chain" id="PRO_0000439455" description="Lysine-specific demethylase 9">
    <location>
        <begin position="1"/>
        <end position="1641"/>
    </location>
</feature>
<feature type="domain" description="JmjC" evidence="2">
    <location>
        <begin position="1431"/>
        <end position="1625"/>
    </location>
</feature>
<feature type="region of interest" description="Disordered" evidence="3">
    <location>
        <begin position="1"/>
        <end position="108"/>
    </location>
</feature>
<feature type="region of interest" description="Disordered" evidence="3">
    <location>
        <begin position="199"/>
        <end position="233"/>
    </location>
</feature>
<feature type="region of interest" description="Disordered" evidence="3">
    <location>
        <begin position="250"/>
        <end position="454"/>
    </location>
</feature>
<feature type="region of interest" description="Disordered" evidence="3">
    <location>
        <begin position="479"/>
        <end position="678"/>
    </location>
</feature>
<feature type="region of interest" description="Disordered" evidence="3">
    <location>
        <begin position="716"/>
        <end position="744"/>
    </location>
</feature>
<feature type="region of interest" description="Disordered" evidence="3">
    <location>
        <begin position="759"/>
        <end position="808"/>
    </location>
</feature>
<feature type="region of interest" description="Disordered" evidence="3">
    <location>
        <begin position="821"/>
        <end position="928"/>
    </location>
</feature>
<feature type="region of interest" description="Disordered" evidence="3">
    <location>
        <begin position="956"/>
        <end position="1003"/>
    </location>
</feature>
<feature type="region of interest" description="Disordered" evidence="3">
    <location>
        <begin position="1105"/>
        <end position="1125"/>
    </location>
</feature>
<feature type="region of interest" description="Disordered" evidence="3">
    <location>
        <begin position="1397"/>
        <end position="1491"/>
    </location>
</feature>
<feature type="coiled-coil region" evidence="1">
    <location>
        <begin position="388"/>
        <end position="443"/>
    </location>
</feature>
<feature type="coiled-coil region" evidence="1">
    <location>
        <begin position="947"/>
        <end position="979"/>
    </location>
</feature>
<feature type="coiled-coil region" evidence="1">
    <location>
        <begin position="1122"/>
        <end position="1186"/>
    </location>
</feature>
<feature type="compositionally biased region" description="Basic and acidic residues" evidence="3">
    <location>
        <begin position="14"/>
        <end position="26"/>
    </location>
</feature>
<feature type="compositionally biased region" description="Low complexity" evidence="3">
    <location>
        <begin position="38"/>
        <end position="47"/>
    </location>
</feature>
<feature type="compositionally biased region" description="Basic and acidic residues" evidence="3">
    <location>
        <begin position="62"/>
        <end position="73"/>
    </location>
</feature>
<feature type="compositionally biased region" description="Low complexity" evidence="3">
    <location>
        <begin position="91"/>
        <end position="108"/>
    </location>
</feature>
<feature type="compositionally biased region" description="Pro residues" evidence="3">
    <location>
        <begin position="203"/>
        <end position="212"/>
    </location>
</feature>
<feature type="compositionally biased region" description="Pro residues" evidence="3">
    <location>
        <begin position="272"/>
        <end position="282"/>
    </location>
</feature>
<feature type="compositionally biased region" description="Pro residues" evidence="3">
    <location>
        <begin position="309"/>
        <end position="322"/>
    </location>
</feature>
<feature type="compositionally biased region" description="Basic and acidic residues" evidence="3">
    <location>
        <begin position="400"/>
        <end position="450"/>
    </location>
</feature>
<feature type="compositionally biased region" description="Basic and acidic residues" evidence="3">
    <location>
        <begin position="483"/>
        <end position="495"/>
    </location>
</feature>
<feature type="compositionally biased region" description="Polar residues" evidence="3">
    <location>
        <begin position="534"/>
        <end position="551"/>
    </location>
</feature>
<feature type="compositionally biased region" description="Basic and acidic residues" evidence="3">
    <location>
        <begin position="571"/>
        <end position="580"/>
    </location>
</feature>
<feature type="compositionally biased region" description="Low complexity" evidence="3">
    <location>
        <begin position="605"/>
        <end position="622"/>
    </location>
</feature>
<feature type="compositionally biased region" description="Low complexity" evidence="3">
    <location>
        <begin position="761"/>
        <end position="782"/>
    </location>
</feature>
<feature type="compositionally biased region" description="Pro residues" evidence="3">
    <location>
        <begin position="783"/>
        <end position="801"/>
    </location>
</feature>
<feature type="compositionally biased region" description="Basic and acidic residues" evidence="3">
    <location>
        <begin position="829"/>
        <end position="838"/>
    </location>
</feature>
<feature type="compositionally biased region" description="Basic residues" evidence="3">
    <location>
        <begin position="852"/>
        <end position="865"/>
    </location>
</feature>
<feature type="compositionally biased region" description="Pro residues" evidence="3">
    <location>
        <begin position="871"/>
        <end position="881"/>
    </location>
</feature>
<feature type="compositionally biased region" description="Basic and acidic residues" evidence="3">
    <location>
        <begin position="966"/>
        <end position="979"/>
    </location>
</feature>
<feature type="compositionally biased region" description="Polar residues" evidence="3">
    <location>
        <begin position="985"/>
        <end position="998"/>
    </location>
</feature>
<feature type="compositionally biased region" description="Basic and acidic residues" evidence="3">
    <location>
        <begin position="1422"/>
        <end position="1459"/>
    </location>
</feature>
<feature type="compositionally biased region" description="Low complexity" evidence="3">
    <location>
        <begin position="1465"/>
        <end position="1481"/>
    </location>
</feature>
<feature type="binding site" evidence="17">
    <location>
        <position position="1449"/>
    </location>
    <ligand>
        <name>2-oxoglutarate</name>
        <dbReference type="ChEBI" id="CHEBI:16810"/>
    </ligand>
</feature>
<feature type="binding site" evidence="9 17">
    <location>
        <position position="1452"/>
    </location>
    <ligand>
        <name>Fe cation</name>
        <dbReference type="ChEBI" id="CHEBI:24875"/>
        <note>catalytic</note>
    </ligand>
</feature>
<feature type="binding site" evidence="9 17">
    <location>
        <position position="1454"/>
    </location>
    <ligand>
        <name>Fe cation</name>
        <dbReference type="ChEBI" id="CHEBI:24875"/>
        <note>catalytic</note>
    </ligand>
</feature>
<feature type="binding site" evidence="17">
    <location>
        <position position="1585"/>
    </location>
    <ligand>
        <name>2-oxoglutarate</name>
        <dbReference type="ChEBI" id="CHEBI:16810"/>
    </ligand>
</feature>
<feature type="binding site" evidence="9 17">
    <location>
        <position position="1593"/>
    </location>
    <ligand>
        <name>Fe cation</name>
        <dbReference type="ChEBI" id="CHEBI:24875"/>
        <note>catalytic</note>
    </ligand>
</feature>
<feature type="mutagenesis site" description="In y622; loss of demethylase activity. Sex-specific enrichment of H4K20me1 is abolished from X chromosomes in XX adults and embryos. Elevated X-linked gene transcription relative to autosomes. Leads to increased X chromosome volume. Suppresses the X0-specific lethality in a xol-1(y9) mutant background, where the DCC is inappropriately activated." evidence="9">
    <original>HAD</original>
    <variation>AAA</variation>
    <location>
        <begin position="1452"/>
        <end position="1454"/>
    </location>
</feature>
<feature type="mutagenesis site" description="In y607; sex-specific enrichment of H4K20me1 is abolished from X chromosomes in XX adults and embryos. Elevated X-linked gene transcription relative to autosomes. Leads to increased X chromosome volume. Results in less distinct chromosome organization and reduced boundary strength of topologically associating domains (TADs). Loss of H4K20me1 enrichment on autosomes and decompaction in male and hermaphrodite meiotic germ cells. Suppresses the X0-specific lethality in a xol-1 mutant background, where the DCC is inappropriately activated." evidence="9">
    <original>H</original>
    <variation>A</variation>
    <location>
        <position position="1452"/>
    </location>
</feature>
<feature type="mutagenesis site" description="In y618; sex-specific enrichment of H4K20me1 is abolished from X chromosomes in XX adults and embryos. Elevated X-linked gene transcription relative to autosomes. Leads to increased X chromosome volume. Suppresses the X0-specific lethality in a xol-1 mutant background, where the DCC is inappropriately activated." evidence="9">
    <original>D</original>
    <variation>A</variation>
    <location>
        <position position="1454"/>
    </location>
</feature>
<feature type="helix" evidence="18">
    <location>
        <begin position="1210"/>
        <end position="1222"/>
    </location>
</feature>
<feature type="helix" evidence="18">
    <location>
        <begin position="1232"/>
        <end position="1235"/>
    </location>
</feature>
<feature type="strand" evidence="18">
    <location>
        <begin position="1239"/>
        <end position="1242"/>
    </location>
</feature>
<feature type="turn" evidence="18">
    <location>
        <begin position="1244"/>
        <end position="1246"/>
    </location>
</feature>
<feature type="strand" evidence="18">
    <location>
        <begin position="1249"/>
        <end position="1254"/>
    </location>
</feature>
<feature type="helix" evidence="18">
    <location>
        <begin position="1255"/>
        <end position="1258"/>
    </location>
</feature>
<feature type="turn" evidence="18">
    <location>
        <begin position="1259"/>
        <end position="1261"/>
    </location>
</feature>
<feature type="helix" evidence="18">
    <location>
        <begin position="1264"/>
        <end position="1278"/>
    </location>
</feature>
<feature type="strand" evidence="18">
    <location>
        <begin position="1285"/>
        <end position="1287"/>
    </location>
</feature>
<feature type="strand" evidence="18">
    <location>
        <begin position="1289"/>
        <end position="1294"/>
    </location>
</feature>
<feature type="turn" evidence="18">
    <location>
        <begin position="1295"/>
        <end position="1299"/>
    </location>
</feature>
<feature type="helix" evidence="18">
    <location>
        <begin position="1303"/>
        <end position="1310"/>
    </location>
</feature>
<feature type="strand" evidence="18">
    <location>
        <begin position="1315"/>
        <end position="1319"/>
    </location>
</feature>
<feature type="strand" evidence="18">
    <location>
        <begin position="1327"/>
        <end position="1331"/>
    </location>
</feature>
<feature type="helix" evidence="18">
    <location>
        <begin position="1332"/>
        <end position="1342"/>
    </location>
</feature>
<feature type="strand" evidence="18">
    <location>
        <begin position="1347"/>
        <end position="1350"/>
    </location>
</feature>
<feature type="strand" evidence="18">
    <location>
        <begin position="1353"/>
        <end position="1358"/>
    </location>
</feature>
<feature type="helix" evidence="18">
    <location>
        <begin position="1371"/>
        <end position="1378"/>
    </location>
</feature>
<feature type="turn" evidence="18">
    <location>
        <begin position="1381"/>
        <end position="1383"/>
    </location>
</feature>
<feature type="helix" evidence="18">
    <location>
        <begin position="1384"/>
        <end position="1386"/>
    </location>
</feature>
<feature type="helix" evidence="18">
    <location>
        <begin position="1403"/>
        <end position="1405"/>
    </location>
</feature>
<feature type="strand" evidence="18">
    <location>
        <begin position="1408"/>
        <end position="1412"/>
    </location>
</feature>
<feature type="strand" evidence="18">
    <location>
        <begin position="1415"/>
        <end position="1418"/>
    </location>
</feature>
<feature type="strand" evidence="18">
    <location>
        <begin position="1443"/>
        <end position="1445"/>
    </location>
</feature>
<feature type="strand" evidence="18">
    <location>
        <begin position="1448"/>
        <end position="1452"/>
    </location>
</feature>
<feature type="strand" evidence="18">
    <location>
        <begin position="1498"/>
        <end position="1505"/>
    </location>
</feature>
<feature type="helix" evidence="18">
    <location>
        <begin position="1519"/>
        <end position="1521"/>
    </location>
</feature>
<feature type="strand" evidence="18">
    <location>
        <begin position="1524"/>
        <end position="1531"/>
    </location>
</feature>
<feature type="helix" evidence="18">
    <location>
        <begin position="1533"/>
        <end position="1535"/>
    </location>
</feature>
<feature type="helix" evidence="18">
    <location>
        <begin position="1536"/>
        <end position="1542"/>
    </location>
</feature>
<feature type="helix" evidence="18">
    <location>
        <begin position="1551"/>
        <end position="1553"/>
    </location>
</feature>
<feature type="helix" evidence="18">
    <location>
        <begin position="1561"/>
        <end position="1568"/>
    </location>
</feature>
<feature type="turn" evidence="18">
    <location>
        <begin position="1569"/>
        <end position="1571"/>
    </location>
</feature>
<feature type="strand" evidence="18">
    <location>
        <begin position="1574"/>
        <end position="1580"/>
    </location>
</feature>
<feature type="strand" evidence="18">
    <location>
        <begin position="1584"/>
        <end position="1587"/>
    </location>
</feature>
<feature type="strand" evidence="18">
    <location>
        <begin position="1593"/>
        <end position="1597"/>
    </location>
</feature>
<feature type="strand" evidence="18">
    <location>
        <begin position="1601"/>
        <end position="1608"/>
    </location>
</feature>
<evidence type="ECO:0000255" key="1"/>
<evidence type="ECO:0000255" key="2">
    <source>
        <dbReference type="PROSITE-ProRule" id="PRU00538"/>
    </source>
</evidence>
<evidence type="ECO:0000256" key="3">
    <source>
        <dbReference type="SAM" id="MobiDB-lite"/>
    </source>
</evidence>
<evidence type="ECO:0000269" key="4">
    <source>
    </source>
</evidence>
<evidence type="ECO:0000269" key="5">
    <source>
    </source>
</evidence>
<evidence type="ECO:0000269" key="6">
    <source>
    </source>
</evidence>
<evidence type="ECO:0000269" key="7">
    <source>
    </source>
</evidence>
<evidence type="ECO:0000269" key="8">
    <source>
    </source>
</evidence>
<evidence type="ECO:0000269" key="9">
    <source>
    </source>
</evidence>
<evidence type="ECO:0000269" key="10">
    <source>
    </source>
</evidence>
<evidence type="ECO:0000269" key="11">
    <source>
    </source>
</evidence>
<evidence type="ECO:0000269" key="12">
    <source>
    </source>
</evidence>
<evidence type="ECO:0000303" key="13">
    <source>
    </source>
</evidence>
<evidence type="ECO:0000305" key="14"/>
<evidence type="ECO:0000312" key="15">
    <source>
        <dbReference type="Proteomes" id="UP000001940"/>
    </source>
</evidence>
<evidence type="ECO:0000312" key="16">
    <source>
        <dbReference type="WormBase" id="Y59A8B.1a"/>
    </source>
</evidence>
<evidence type="ECO:0007744" key="17">
    <source>
        <dbReference type="PDB" id="5UQD"/>
    </source>
</evidence>
<evidence type="ECO:0007829" key="18">
    <source>
        <dbReference type="PDB" id="5UQD"/>
    </source>
</evidence>
<name>DPY21_CAEEL</name>
<proteinExistence type="evidence at protein level"/>
<protein>
    <recommendedName>
        <fullName evidence="13">Lysine-specific demethylase 9</fullName>
        <shortName evidence="13">KDM9</shortName>
        <ecNumber evidence="9">1.14.11.-</ecNumber>
    </recommendedName>
    <alternativeName>
        <fullName evidence="14">Dosage compensation protein dpy-21</fullName>
    </alternativeName>
</protein>
<keyword id="KW-0002">3D-structure</keyword>
<keyword id="KW-0158">Chromosome</keyword>
<keyword id="KW-0175">Coiled coil</keyword>
<keyword id="KW-0223">Dioxygenase</keyword>
<keyword id="KW-0408">Iron</keyword>
<keyword id="KW-0479">Metal-binding</keyword>
<keyword id="KW-0539">Nucleus</keyword>
<keyword id="KW-0560">Oxidoreductase</keyword>
<keyword id="KW-1185">Reference proteome</keyword>
<keyword id="KW-0804">Transcription</keyword>
<keyword id="KW-0805">Transcription regulation</keyword>